<organism>
    <name type="scientific">Dictyostelium discoideum</name>
    <name type="common">Social amoeba</name>
    <dbReference type="NCBI Taxonomy" id="44689"/>
    <lineage>
        <taxon>Eukaryota</taxon>
        <taxon>Amoebozoa</taxon>
        <taxon>Evosea</taxon>
        <taxon>Eumycetozoa</taxon>
        <taxon>Dictyostelia</taxon>
        <taxon>Dictyosteliales</taxon>
        <taxon>Dictyosteliaceae</taxon>
        <taxon>Dictyostelium</taxon>
    </lineage>
</organism>
<dbReference type="EMBL" id="AAFI02000020">
    <property type="protein sequence ID" value="EAL68694.1"/>
    <property type="molecule type" value="Genomic_DNA"/>
</dbReference>
<dbReference type="RefSeq" id="XP_642661.1">
    <property type="nucleotide sequence ID" value="XM_637569.1"/>
</dbReference>
<dbReference type="GlyGen" id="Q8MN48">
    <property type="glycosylation" value="1 site"/>
</dbReference>
<dbReference type="PaxDb" id="44689-DDB0169263"/>
<dbReference type="EnsemblProtists" id="EAL68694">
    <property type="protein sequence ID" value="EAL68694"/>
    <property type="gene ID" value="DDB_G0277463"/>
</dbReference>
<dbReference type="GeneID" id="8621077"/>
<dbReference type="KEGG" id="ddi:DDB_G0277463"/>
<dbReference type="dictyBase" id="DDB_G0277463"/>
<dbReference type="VEuPathDB" id="AmoebaDB:DDB_G0277463"/>
<dbReference type="HOGENOM" id="CLU_2781201_0_0_1"/>
<dbReference type="InParanoid" id="Q8MN48"/>
<dbReference type="PRO" id="PR:Q8MN48"/>
<dbReference type="Proteomes" id="UP000002195">
    <property type="component" value="Chromosome 2"/>
</dbReference>
<dbReference type="GO" id="GO:0005576">
    <property type="term" value="C:extracellular region"/>
    <property type="evidence" value="ECO:0007669"/>
    <property type="project" value="UniProtKB-SubCell"/>
</dbReference>
<feature type="signal peptide" evidence="1">
    <location>
        <begin position="1"/>
        <end position="21"/>
    </location>
</feature>
<feature type="chain" id="PRO_0000348183" description="Putative uncharacterized protein DDB_G0277463">
    <location>
        <begin position="22"/>
        <end position="69"/>
    </location>
</feature>
<feature type="glycosylation site" description="N-linked (GlcNAc...) asparagine" evidence="1">
    <location>
        <position position="41"/>
    </location>
</feature>
<proteinExistence type="inferred from homology"/>
<keyword id="KW-0325">Glycoprotein</keyword>
<keyword id="KW-1185">Reference proteome</keyword>
<keyword id="KW-0964">Secreted</keyword>
<keyword id="KW-0732">Signal</keyword>
<protein>
    <recommendedName>
        <fullName>Putative uncharacterized protein DDB_G0277463</fullName>
    </recommendedName>
</protein>
<reference key="1">
    <citation type="journal article" date="2002" name="Nature">
        <title>Sequence and analysis of chromosome 2 of Dictyostelium discoideum.</title>
        <authorList>
            <person name="Gloeckner G."/>
            <person name="Eichinger L."/>
            <person name="Szafranski K."/>
            <person name="Pachebat J.A."/>
            <person name="Bankier A.T."/>
            <person name="Dear P.H."/>
            <person name="Lehmann R."/>
            <person name="Baumgart C."/>
            <person name="Parra G."/>
            <person name="Abril J.F."/>
            <person name="Guigo R."/>
            <person name="Kumpf K."/>
            <person name="Tunggal B."/>
            <person name="Cox E.C."/>
            <person name="Quail M.A."/>
            <person name="Platzer M."/>
            <person name="Rosenthal A."/>
            <person name="Noegel A.A."/>
        </authorList>
    </citation>
    <scope>NUCLEOTIDE SEQUENCE [LARGE SCALE GENOMIC DNA]</scope>
    <source>
        <strain>AX4</strain>
    </source>
</reference>
<reference key="2">
    <citation type="journal article" date="2005" name="Nature">
        <title>The genome of the social amoeba Dictyostelium discoideum.</title>
        <authorList>
            <person name="Eichinger L."/>
            <person name="Pachebat J.A."/>
            <person name="Gloeckner G."/>
            <person name="Rajandream M.A."/>
            <person name="Sucgang R."/>
            <person name="Berriman M."/>
            <person name="Song J."/>
            <person name="Olsen R."/>
            <person name="Szafranski K."/>
            <person name="Xu Q."/>
            <person name="Tunggal B."/>
            <person name="Kummerfeld S."/>
            <person name="Madera M."/>
            <person name="Konfortov B.A."/>
            <person name="Rivero F."/>
            <person name="Bankier A.T."/>
            <person name="Lehmann R."/>
            <person name="Hamlin N."/>
            <person name="Davies R."/>
            <person name="Gaudet P."/>
            <person name="Fey P."/>
            <person name="Pilcher K."/>
            <person name="Chen G."/>
            <person name="Saunders D."/>
            <person name="Sodergren E.J."/>
            <person name="Davis P."/>
            <person name="Kerhornou A."/>
            <person name="Nie X."/>
            <person name="Hall N."/>
            <person name="Anjard C."/>
            <person name="Hemphill L."/>
            <person name="Bason N."/>
            <person name="Farbrother P."/>
            <person name="Desany B."/>
            <person name="Just E."/>
            <person name="Morio T."/>
            <person name="Rost R."/>
            <person name="Churcher C.M."/>
            <person name="Cooper J."/>
            <person name="Haydock S."/>
            <person name="van Driessche N."/>
            <person name="Cronin A."/>
            <person name="Goodhead I."/>
            <person name="Muzny D.M."/>
            <person name="Mourier T."/>
            <person name="Pain A."/>
            <person name="Lu M."/>
            <person name="Harper D."/>
            <person name="Lindsay R."/>
            <person name="Hauser H."/>
            <person name="James K.D."/>
            <person name="Quiles M."/>
            <person name="Madan Babu M."/>
            <person name="Saito T."/>
            <person name="Buchrieser C."/>
            <person name="Wardroper A."/>
            <person name="Felder M."/>
            <person name="Thangavelu M."/>
            <person name="Johnson D."/>
            <person name="Knights A."/>
            <person name="Loulseged H."/>
            <person name="Mungall K.L."/>
            <person name="Oliver K."/>
            <person name="Price C."/>
            <person name="Quail M.A."/>
            <person name="Urushihara H."/>
            <person name="Hernandez J."/>
            <person name="Rabbinowitsch E."/>
            <person name="Steffen D."/>
            <person name="Sanders M."/>
            <person name="Ma J."/>
            <person name="Kohara Y."/>
            <person name="Sharp S."/>
            <person name="Simmonds M.N."/>
            <person name="Spiegler S."/>
            <person name="Tivey A."/>
            <person name="Sugano S."/>
            <person name="White B."/>
            <person name="Walker D."/>
            <person name="Woodward J.R."/>
            <person name="Winckler T."/>
            <person name="Tanaka Y."/>
            <person name="Shaulsky G."/>
            <person name="Schleicher M."/>
            <person name="Weinstock G.M."/>
            <person name="Rosenthal A."/>
            <person name="Cox E.C."/>
            <person name="Chisholm R.L."/>
            <person name="Gibbs R.A."/>
            <person name="Loomis W.F."/>
            <person name="Platzer M."/>
            <person name="Kay R.R."/>
            <person name="Williams J.G."/>
            <person name="Dear P.H."/>
            <person name="Noegel A.A."/>
            <person name="Barrell B.G."/>
            <person name="Kuspa A."/>
        </authorList>
    </citation>
    <scope>NUCLEOTIDE SEQUENCE [LARGE SCALE GENOMIC DNA]</scope>
    <source>
        <strain>AX4</strain>
    </source>
</reference>
<accession>Q8MN48</accession>
<accession>Q54ZI1</accession>
<comment type="subcellular location">
    <subcellularLocation>
        <location evidence="2">Secreted</location>
    </subcellularLocation>
</comment>
<evidence type="ECO:0000255" key="1"/>
<evidence type="ECO:0000305" key="2"/>
<gene>
    <name type="ORF">DDB_G0277463</name>
</gene>
<sequence>MELLIPLSLLGLYLFSGTRDSVHKGEVKDDLKEKPIKVNFNLTDSTKVDHKTHLKQYSSLKPGDTLEIL</sequence>
<name>Y9263_DICDI</name>